<accession>Q9L393</accession>
<accession>E0SMH8</accession>
<comment type="function">
    <text evidence="1 2">Catalyzes the reversible cleavage of pseudouridine 5'-phosphate (PsiMP) to ribose 5-phosphate and uracil. Functions biologically in the cleavage direction, as part of a pseudouridine degradation pathway (By similarity). Part of an operon that could be involved in the biosynthesis of the blue pigment indigoidine, which is implicated in pathogenicity and protection from oxidative stress (PubMed:11790734).</text>
</comment>
<comment type="catalytic activity">
    <reaction evidence="1">
        <text>D-ribose 5-phosphate + uracil = psi-UMP + H2O</text>
        <dbReference type="Rhea" id="RHEA:18337"/>
        <dbReference type="ChEBI" id="CHEBI:15377"/>
        <dbReference type="ChEBI" id="CHEBI:17568"/>
        <dbReference type="ChEBI" id="CHEBI:58380"/>
        <dbReference type="ChEBI" id="CHEBI:78346"/>
        <dbReference type="EC" id="4.2.1.70"/>
    </reaction>
</comment>
<comment type="cofactor">
    <cofactor evidence="1">
        <name>Mn(2+)</name>
        <dbReference type="ChEBI" id="CHEBI:29035"/>
    </cofactor>
    <text evidence="1">Binds 1 Mn(2+) ion per subunit.</text>
</comment>
<comment type="subunit">
    <text evidence="1">Homotrimer.</text>
</comment>
<comment type="induction">
    <text evidence="2">Moderately expressed in the wild-type strain (PubMed:11790734). Expression is repressed by the HTH-type transcriptional regulator PecS (PubMed:11790734). Weakly induced under oxidative stress (PubMed:11790734). Expression is 10-fold induced during infection of Saintpaulia plants (PubMed:11790734).</text>
</comment>
<comment type="disruption phenotype">
    <text evidence="2">The mutant shows lower tolerance to oxidative stress (PubMed:11790734). It exhibits a decreased ability to cause systemic disease on potted S.ionantha (PubMed:11790734).</text>
</comment>
<comment type="similarity">
    <text evidence="1">Belongs to the pseudouridine-5'-phosphate glycosidase family.</text>
</comment>
<feature type="chain" id="PRO_0000461770" description="Pseudouridine-5'-phosphate glycosidase">
    <location>
        <begin position="1"/>
        <end position="316"/>
    </location>
</feature>
<feature type="active site" description="Proton donor" evidence="1">
    <location>
        <position position="31"/>
    </location>
</feature>
<feature type="active site" description="Nucleophile" evidence="1">
    <location>
        <position position="165"/>
    </location>
</feature>
<feature type="binding site" evidence="1">
    <location>
        <position position="92"/>
    </location>
    <ligand>
        <name>substrate</name>
    </ligand>
</feature>
<feature type="binding site" evidence="1">
    <location>
        <position position="112"/>
    </location>
    <ligand>
        <name>substrate</name>
    </ligand>
</feature>
<feature type="binding site" evidence="1">
    <location>
        <position position="144"/>
    </location>
    <ligand>
        <name>Mn(2+)</name>
        <dbReference type="ChEBI" id="CHEBI:29035"/>
    </ligand>
</feature>
<feature type="binding site" evidence="1">
    <location>
        <begin position="146"/>
        <end position="148"/>
    </location>
    <ligand>
        <name>substrate</name>
    </ligand>
</feature>
<feature type="sequence conflict" description="In Ref. 1; CAB87988." evidence="4" ref="1">
    <original>L</original>
    <variation>S</variation>
    <location>
        <position position="11"/>
    </location>
</feature>
<feature type="sequence conflict" description="In Ref. 1; CAB87988." evidence="4" ref="1">
    <original>G</original>
    <variation>D</variation>
    <location>
        <position position="66"/>
    </location>
</feature>
<dbReference type="EC" id="4.2.1.70" evidence="1"/>
<dbReference type="EMBL" id="AJ277403">
    <property type="protein sequence ID" value="CAB87988.1"/>
    <property type="molecule type" value="Genomic_DNA"/>
</dbReference>
<dbReference type="EMBL" id="CP002038">
    <property type="protein sequence ID" value="ADN00617.1"/>
    <property type="molecule type" value="Genomic_DNA"/>
</dbReference>
<dbReference type="RefSeq" id="WP_013320012.1">
    <property type="nucleotide sequence ID" value="NC_014500.1"/>
</dbReference>
<dbReference type="KEGG" id="ddd:Dda3937_00974"/>
<dbReference type="PATRIC" id="fig|198628.6.peg.4369"/>
<dbReference type="eggNOG" id="COG2313">
    <property type="taxonomic scope" value="Bacteria"/>
</dbReference>
<dbReference type="HOGENOM" id="CLU_012201_0_1_6"/>
<dbReference type="OrthoDB" id="9805870at2"/>
<dbReference type="Proteomes" id="UP000006859">
    <property type="component" value="Chromosome"/>
</dbReference>
<dbReference type="GO" id="GO:0005737">
    <property type="term" value="C:cytoplasm"/>
    <property type="evidence" value="ECO:0007669"/>
    <property type="project" value="TreeGrafter"/>
</dbReference>
<dbReference type="GO" id="GO:0016798">
    <property type="term" value="F:hydrolase activity, acting on glycosyl bonds"/>
    <property type="evidence" value="ECO:0007669"/>
    <property type="project" value="UniProtKB-KW"/>
</dbReference>
<dbReference type="GO" id="GO:0046872">
    <property type="term" value="F:metal ion binding"/>
    <property type="evidence" value="ECO:0007669"/>
    <property type="project" value="UniProtKB-KW"/>
</dbReference>
<dbReference type="GO" id="GO:0004730">
    <property type="term" value="F:pseudouridylate synthase activity"/>
    <property type="evidence" value="ECO:0007669"/>
    <property type="project" value="UniProtKB-UniRule"/>
</dbReference>
<dbReference type="GO" id="GO:0046113">
    <property type="term" value="P:nucleobase catabolic process"/>
    <property type="evidence" value="ECO:0007669"/>
    <property type="project" value="UniProtKB-UniRule"/>
</dbReference>
<dbReference type="Gene3D" id="3.40.1790.10">
    <property type="entry name" value="Indigoidine synthase domain"/>
    <property type="match status" value="1"/>
</dbReference>
<dbReference type="HAMAP" id="MF_01876">
    <property type="entry name" value="PsiMP_glycosidase"/>
    <property type="match status" value="1"/>
</dbReference>
<dbReference type="InterPro" id="IPR022830">
    <property type="entry name" value="Indigdn_synthA-like"/>
</dbReference>
<dbReference type="InterPro" id="IPR007342">
    <property type="entry name" value="PsuG"/>
</dbReference>
<dbReference type="PANTHER" id="PTHR42909:SF1">
    <property type="entry name" value="CARBOHYDRATE KINASE PFKB DOMAIN-CONTAINING PROTEIN"/>
    <property type="match status" value="1"/>
</dbReference>
<dbReference type="PANTHER" id="PTHR42909">
    <property type="entry name" value="ZGC:136858"/>
    <property type="match status" value="1"/>
</dbReference>
<dbReference type="Pfam" id="PF04227">
    <property type="entry name" value="Indigoidine_A"/>
    <property type="match status" value="1"/>
</dbReference>
<dbReference type="SUPFAM" id="SSF110581">
    <property type="entry name" value="Indigoidine synthase A-like"/>
    <property type="match status" value="1"/>
</dbReference>
<evidence type="ECO:0000255" key="1">
    <source>
        <dbReference type="HAMAP-Rule" id="MF_01876"/>
    </source>
</evidence>
<evidence type="ECO:0000269" key="2">
    <source>
    </source>
</evidence>
<evidence type="ECO:0000303" key="3">
    <source>
    </source>
</evidence>
<evidence type="ECO:0000305" key="4"/>
<evidence type="ECO:0000312" key="5">
    <source>
        <dbReference type="EMBL" id="ADN00617.1"/>
    </source>
</evidence>
<evidence type="ECO:0000312" key="6">
    <source>
        <dbReference type="EMBL" id="CAB87988.1"/>
    </source>
</evidence>
<keyword id="KW-0326">Glycosidase</keyword>
<keyword id="KW-0378">Hydrolase</keyword>
<keyword id="KW-0456">Lyase</keyword>
<keyword id="KW-0464">Manganese</keyword>
<keyword id="KW-0479">Metal-binding</keyword>
<keyword id="KW-1185">Reference proteome</keyword>
<protein>
    <recommendedName>
        <fullName evidence="1">Pseudouridine-5'-phosphate glycosidase</fullName>
        <shortName evidence="1">PsiMP glycosidase</shortName>
        <ecNumber evidence="1">4.2.1.70</ecNumber>
    </recommendedName>
</protein>
<proteinExistence type="evidence at transcript level"/>
<organism>
    <name type="scientific">Dickeya dadantii (strain 3937)</name>
    <name type="common">Erwinia chrysanthemi (strain 3937)</name>
    <dbReference type="NCBI Taxonomy" id="198628"/>
    <lineage>
        <taxon>Bacteria</taxon>
        <taxon>Pseudomonadati</taxon>
        <taxon>Pseudomonadota</taxon>
        <taxon>Gammaproteobacteria</taxon>
        <taxon>Enterobacterales</taxon>
        <taxon>Pectobacteriaceae</taxon>
        <taxon>Dickeya</taxon>
    </lineage>
</organism>
<reference evidence="6" key="1">
    <citation type="journal article" date="2002" name="J. Bacteriol.">
        <title>Characterization of indigoidine biosynthetic genes in Erwinia chrysanthemi and role of this blue pigment in pathogenicity.</title>
        <authorList>
            <person name="Reverchon S."/>
            <person name="Rouanet C."/>
            <person name="Expert D."/>
            <person name="Nasser W."/>
        </authorList>
    </citation>
    <scope>NUCLEOTIDE SEQUENCE [GENOMIC DNA]</scope>
    <scope>FUNCTION</scope>
    <scope>INDUCTION</scope>
    <scope>DISRUPTION PHENOTYPE</scope>
    <source>
        <strain>3937</strain>
    </source>
</reference>
<reference evidence="5" key="2">
    <citation type="journal article" date="2011" name="J. Bacteriol.">
        <title>Genome sequence of the plant-pathogenic bacterium Dickeya dadantii 3937.</title>
        <authorList>
            <person name="Glasner J.D."/>
            <person name="Yang C.H."/>
            <person name="Reverchon S."/>
            <person name="Hugouvieux-Cotte-Pattat N."/>
            <person name="Condemine G."/>
            <person name="Bohin J.P."/>
            <person name="Van Gijsegem F."/>
            <person name="Yang S."/>
            <person name="Franza T."/>
            <person name="Expert D."/>
            <person name="Plunkett G. III"/>
            <person name="San Francisco M.J."/>
            <person name="Charkowski A.O."/>
            <person name="Py B."/>
            <person name="Bell K."/>
            <person name="Rauscher L."/>
            <person name="Rodriguez-Palenzuela P."/>
            <person name="Toussaint A."/>
            <person name="Holeva M.C."/>
            <person name="He S.Y."/>
            <person name="Douet V."/>
            <person name="Boccara M."/>
            <person name="Blanco C."/>
            <person name="Toth I."/>
            <person name="Anderson B.D."/>
            <person name="Biehl B.S."/>
            <person name="Mau B."/>
            <person name="Flynn S.M."/>
            <person name="Barras F."/>
            <person name="Lindeberg M."/>
            <person name="Birch P.R."/>
            <person name="Tsuyumu S."/>
            <person name="Shi X."/>
            <person name="Hibbing M."/>
            <person name="Yap M.N."/>
            <person name="Carpentier M."/>
            <person name="Dassa E."/>
            <person name="Umehara M."/>
            <person name="Kim J.F."/>
            <person name="Rusch M."/>
            <person name="Soni P."/>
            <person name="Mayhew G.F."/>
            <person name="Fouts D.E."/>
            <person name="Gill S.R."/>
            <person name="Blattner F.R."/>
            <person name="Keen N.T."/>
            <person name="Perna N.T."/>
        </authorList>
    </citation>
    <scope>NUCLEOTIDE SEQUENCE [LARGE SCALE GENOMIC DNA]</scope>
    <source>
        <strain>3937</strain>
    </source>
</reference>
<sequence length="316" mass="33576">MSKTDFSHDLLRFSDEVKEALHSGKPVVALESTVIAHGLPYPENVATARKIEAAVRAEGAIPATIGIENGRFLIGMSDADLERFGSTRGIPKASSRDIPVILAQGGMGATTVASSLVAADLAGIPFFASAGIGGVHRGAERSMDISADLIQFTRSRVAVVCAGAKSILDLGLTLEYLETQCVPIISYQSDDFPAFYCRSSGFHSPHRLDDATVIARSIDMHWKLGNQSSVLITHPIHEEDAIGTDEVESIIREAAVQAEHEGIRGPGATPYLMRAVAKATEGKTVKANMSVLISTAALAGKLACAHIDYLRQQNQA</sequence>
<name>PSUG_DICD3</name>
<gene>
    <name evidence="3" type="primary">indA</name>
    <name evidence="1" type="synonym">psuG</name>
    <name evidence="5" type="ordered locus">Dda3937_00974</name>
</gene>